<evidence type="ECO:0000255" key="1">
    <source>
        <dbReference type="HAMAP-Rule" id="MF_01024"/>
    </source>
</evidence>
<name>HISX_BACLD</name>
<protein>
    <recommendedName>
        <fullName evidence="1">Histidinol dehydrogenase</fullName>
        <shortName evidence="1">HDH</shortName>
        <ecNumber evidence="1">1.1.1.23</ecNumber>
    </recommendedName>
</protein>
<keyword id="KW-0028">Amino-acid biosynthesis</keyword>
<keyword id="KW-0368">Histidine biosynthesis</keyword>
<keyword id="KW-0479">Metal-binding</keyword>
<keyword id="KW-0520">NAD</keyword>
<keyword id="KW-0560">Oxidoreductase</keyword>
<keyword id="KW-1185">Reference proteome</keyword>
<keyword id="KW-0862">Zinc</keyword>
<gene>
    <name evidence="1" type="primary">hisD</name>
    <name type="ordered locus">BLi03736</name>
    <name type="ordered locus">BL03408</name>
</gene>
<organism>
    <name type="scientific">Bacillus licheniformis (strain ATCC 14580 / DSM 13 / JCM 2505 / CCUG 7422 / NBRC 12200 / NCIMB 9375 / NCTC 10341 / NRRL NRS-1264 / Gibson 46)</name>
    <dbReference type="NCBI Taxonomy" id="279010"/>
    <lineage>
        <taxon>Bacteria</taxon>
        <taxon>Bacillati</taxon>
        <taxon>Bacillota</taxon>
        <taxon>Bacilli</taxon>
        <taxon>Bacillales</taxon>
        <taxon>Bacillaceae</taxon>
        <taxon>Bacillus</taxon>
    </lineage>
</organism>
<dbReference type="EC" id="1.1.1.23" evidence="1"/>
<dbReference type="EMBL" id="AE017333">
    <property type="protein sequence ID" value="AAU42555.1"/>
    <property type="molecule type" value="Genomic_DNA"/>
</dbReference>
<dbReference type="EMBL" id="CP000002">
    <property type="protein sequence ID" value="AAU25184.1"/>
    <property type="molecule type" value="Genomic_DNA"/>
</dbReference>
<dbReference type="RefSeq" id="WP_003185605.1">
    <property type="nucleotide sequence ID" value="NC_006322.1"/>
</dbReference>
<dbReference type="SMR" id="Q65EF9"/>
<dbReference type="STRING" id="279010.BL03408"/>
<dbReference type="GeneID" id="92859686"/>
<dbReference type="KEGG" id="bld:BLi03736"/>
<dbReference type="KEGG" id="bli:BL03408"/>
<dbReference type="eggNOG" id="COG0141">
    <property type="taxonomic scope" value="Bacteria"/>
</dbReference>
<dbReference type="HOGENOM" id="CLU_006732_3_3_9"/>
<dbReference type="UniPathway" id="UPA00031">
    <property type="reaction ID" value="UER00014"/>
</dbReference>
<dbReference type="Proteomes" id="UP000000606">
    <property type="component" value="Chromosome"/>
</dbReference>
<dbReference type="GO" id="GO:0005829">
    <property type="term" value="C:cytosol"/>
    <property type="evidence" value="ECO:0007669"/>
    <property type="project" value="TreeGrafter"/>
</dbReference>
<dbReference type="GO" id="GO:0004399">
    <property type="term" value="F:histidinol dehydrogenase activity"/>
    <property type="evidence" value="ECO:0007669"/>
    <property type="project" value="UniProtKB-UniRule"/>
</dbReference>
<dbReference type="GO" id="GO:0051287">
    <property type="term" value="F:NAD binding"/>
    <property type="evidence" value="ECO:0007669"/>
    <property type="project" value="InterPro"/>
</dbReference>
<dbReference type="GO" id="GO:0008270">
    <property type="term" value="F:zinc ion binding"/>
    <property type="evidence" value="ECO:0007669"/>
    <property type="project" value="UniProtKB-UniRule"/>
</dbReference>
<dbReference type="GO" id="GO:0000105">
    <property type="term" value="P:L-histidine biosynthetic process"/>
    <property type="evidence" value="ECO:0007669"/>
    <property type="project" value="UniProtKB-UniRule"/>
</dbReference>
<dbReference type="CDD" id="cd06572">
    <property type="entry name" value="Histidinol_dh"/>
    <property type="match status" value="1"/>
</dbReference>
<dbReference type="FunFam" id="3.40.50.1980:FF:000001">
    <property type="entry name" value="Histidinol dehydrogenase"/>
    <property type="match status" value="1"/>
</dbReference>
<dbReference type="FunFam" id="3.40.50.1980:FF:000026">
    <property type="entry name" value="Histidinol dehydrogenase"/>
    <property type="match status" value="1"/>
</dbReference>
<dbReference type="Gene3D" id="1.20.5.1300">
    <property type="match status" value="1"/>
</dbReference>
<dbReference type="Gene3D" id="3.40.50.1980">
    <property type="entry name" value="Nitrogenase molybdenum iron protein domain"/>
    <property type="match status" value="2"/>
</dbReference>
<dbReference type="HAMAP" id="MF_01024">
    <property type="entry name" value="HisD"/>
    <property type="match status" value="1"/>
</dbReference>
<dbReference type="InterPro" id="IPR016161">
    <property type="entry name" value="Ald_DH/histidinol_DH"/>
</dbReference>
<dbReference type="InterPro" id="IPR001692">
    <property type="entry name" value="Histidinol_DH_CS"/>
</dbReference>
<dbReference type="InterPro" id="IPR022695">
    <property type="entry name" value="Histidinol_DH_monofunct"/>
</dbReference>
<dbReference type="InterPro" id="IPR012131">
    <property type="entry name" value="Hstdl_DH"/>
</dbReference>
<dbReference type="NCBIfam" id="TIGR00069">
    <property type="entry name" value="hisD"/>
    <property type="match status" value="1"/>
</dbReference>
<dbReference type="PANTHER" id="PTHR21256:SF2">
    <property type="entry name" value="HISTIDINE BIOSYNTHESIS TRIFUNCTIONAL PROTEIN"/>
    <property type="match status" value="1"/>
</dbReference>
<dbReference type="PANTHER" id="PTHR21256">
    <property type="entry name" value="HISTIDINOL DEHYDROGENASE HDH"/>
    <property type="match status" value="1"/>
</dbReference>
<dbReference type="Pfam" id="PF00815">
    <property type="entry name" value="Histidinol_dh"/>
    <property type="match status" value="1"/>
</dbReference>
<dbReference type="PIRSF" id="PIRSF000099">
    <property type="entry name" value="Histidinol_dh"/>
    <property type="match status" value="1"/>
</dbReference>
<dbReference type="PRINTS" id="PR00083">
    <property type="entry name" value="HOLDHDRGNASE"/>
</dbReference>
<dbReference type="SUPFAM" id="SSF53720">
    <property type="entry name" value="ALDH-like"/>
    <property type="match status" value="1"/>
</dbReference>
<dbReference type="PROSITE" id="PS00611">
    <property type="entry name" value="HISOL_DEHYDROGENASE"/>
    <property type="match status" value="1"/>
</dbReference>
<sequence>MKIKSISGNTSVSLKRSIDAGTEEQRKAVRGIIEEVKKNGNAAVSAFTRQFDGADVAGFRVSEEEIKEAYSALEERDLEIIQAAIFNIKEYHERQLATSWFYHRKDGTMLGQKITPLDSAGVYVPGGTAAYPSSVLMNVIPALVAGVDRIVLASPPGKDGKLSAGVLAAAAELGVTEIYKMGGAQAIAALAYGTETITPVDKITGPGNIYVALAKREVFGQVDIDMIAGPSEIAILADSTANYREIAADLLSQAEHDAMASSILVTDSETLAESVLKEVYRQLEHLPRKEIARQSIDNYGLIYVTETMNEAVSVINELAPEHLEILTVQPDALLGQIKHAGAIFLGRYSSEPVGDYFAGPNHVLPTNGTARFSSPLNVTDFQKRSSIISYSREAFRANAEKIAAFARLEGLEAHARAIESRNREED</sequence>
<comment type="function">
    <text evidence="1">Catalyzes the sequential NAD-dependent oxidations of L-histidinol to L-histidinaldehyde and then to L-histidine.</text>
</comment>
<comment type="catalytic activity">
    <reaction evidence="1">
        <text>L-histidinol + 2 NAD(+) + H2O = L-histidine + 2 NADH + 3 H(+)</text>
        <dbReference type="Rhea" id="RHEA:20641"/>
        <dbReference type="ChEBI" id="CHEBI:15377"/>
        <dbReference type="ChEBI" id="CHEBI:15378"/>
        <dbReference type="ChEBI" id="CHEBI:57540"/>
        <dbReference type="ChEBI" id="CHEBI:57595"/>
        <dbReference type="ChEBI" id="CHEBI:57699"/>
        <dbReference type="ChEBI" id="CHEBI:57945"/>
        <dbReference type="EC" id="1.1.1.23"/>
    </reaction>
</comment>
<comment type="cofactor">
    <cofactor evidence="1">
        <name>Zn(2+)</name>
        <dbReference type="ChEBI" id="CHEBI:29105"/>
    </cofactor>
    <text evidence="1">Binds 1 zinc ion per subunit.</text>
</comment>
<comment type="pathway">
    <text evidence="1">Amino-acid biosynthesis; L-histidine biosynthesis; L-histidine from 5-phospho-alpha-D-ribose 1-diphosphate: step 9/9.</text>
</comment>
<comment type="similarity">
    <text evidence="1">Belongs to the histidinol dehydrogenase family.</text>
</comment>
<reference key="1">
    <citation type="journal article" date="2004" name="J. Mol. Microbiol. Biotechnol.">
        <title>The complete genome sequence of Bacillus licheniformis DSM13, an organism with great industrial potential.</title>
        <authorList>
            <person name="Veith B."/>
            <person name="Herzberg C."/>
            <person name="Steckel S."/>
            <person name="Feesche J."/>
            <person name="Maurer K.H."/>
            <person name="Ehrenreich P."/>
            <person name="Baeumer S."/>
            <person name="Henne A."/>
            <person name="Liesegang H."/>
            <person name="Merkl R."/>
            <person name="Ehrenreich A."/>
            <person name="Gottschalk G."/>
        </authorList>
    </citation>
    <scope>NUCLEOTIDE SEQUENCE [LARGE SCALE GENOMIC DNA]</scope>
    <source>
        <strain>ATCC 14580 / DSM 13 / JCM 2505 / CCUG 7422 / NBRC 12200 / NCIMB 9375 / NCTC 10341 / NRRL NRS-1264 / Gibson 46</strain>
    </source>
</reference>
<reference key="2">
    <citation type="journal article" date="2004" name="Genome Biol.">
        <title>Complete genome sequence of the industrial bacterium Bacillus licheniformis and comparisons with closely related Bacillus species.</title>
        <authorList>
            <person name="Rey M.W."/>
            <person name="Ramaiya P."/>
            <person name="Nelson B.A."/>
            <person name="Brody-Karpin S.D."/>
            <person name="Zaretsky E.J."/>
            <person name="Tang M."/>
            <person name="Lopez de Leon A."/>
            <person name="Xiang H."/>
            <person name="Gusti V."/>
            <person name="Clausen I.G."/>
            <person name="Olsen P.B."/>
            <person name="Rasmussen M.D."/>
            <person name="Andersen J.T."/>
            <person name="Joergensen P.L."/>
            <person name="Larsen T.S."/>
            <person name="Sorokin A."/>
            <person name="Bolotin A."/>
            <person name="Lapidus A."/>
            <person name="Galleron N."/>
            <person name="Ehrlich S.D."/>
            <person name="Berka R.M."/>
        </authorList>
    </citation>
    <scope>NUCLEOTIDE SEQUENCE [LARGE SCALE GENOMIC DNA]</scope>
    <source>
        <strain>ATCC 14580 / DSM 13 / JCM 2505 / CCUG 7422 / NBRC 12200 / NCIMB 9375 / NCTC 10341 / NRRL NRS-1264 / Gibson 46</strain>
    </source>
</reference>
<feature type="chain" id="PRO_0000135727" description="Histidinol dehydrogenase">
    <location>
        <begin position="1"/>
        <end position="426"/>
    </location>
</feature>
<feature type="active site" description="Proton acceptor" evidence="1">
    <location>
        <position position="321"/>
    </location>
</feature>
<feature type="active site" description="Proton acceptor" evidence="1">
    <location>
        <position position="322"/>
    </location>
</feature>
<feature type="binding site" evidence="1">
    <location>
        <position position="123"/>
    </location>
    <ligand>
        <name>NAD(+)</name>
        <dbReference type="ChEBI" id="CHEBI:57540"/>
    </ligand>
</feature>
<feature type="binding site" evidence="1">
    <location>
        <position position="185"/>
    </location>
    <ligand>
        <name>NAD(+)</name>
        <dbReference type="ChEBI" id="CHEBI:57540"/>
    </ligand>
</feature>
<feature type="binding site" evidence="1">
    <location>
        <position position="208"/>
    </location>
    <ligand>
        <name>NAD(+)</name>
        <dbReference type="ChEBI" id="CHEBI:57540"/>
    </ligand>
</feature>
<feature type="binding site" evidence="1">
    <location>
        <position position="231"/>
    </location>
    <ligand>
        <name>substrate</name>
    </ligand>
</feature>
<feature type="binding site" evidence="1">
    <location>
        <position position="253"/>
    </location>
    <ligand>
        <name>substrate</name>
    </ligand>
</feature>
<feature type="binding site" evidence="1">
    <location>
        <position position="253"/>
    </location>
    <ligand>
        <name>Zn(2+)</name>
        <dbReference type="ChEBI" id="CHEBI:29105"/>
    </ligand>
</feature>
<feature type="binding site" evidence="1">
    <location>
        <position position="256"/>
    </location>
    <ligand>
        <name>substrate</name>
    </ligand>
</feature>
<feature type="binding site" evidence="1">
    <location>
        <position position="256"/>
    </location>
    <ligand>
        <name>Zn(2+)</name>
        <dbReference type="ChEBI" id="CHEBI:29105"/>
    </ligand>
</feature>
<feature type="binding site" evidence="1">
    <location>
        <position position="322"/>
    </location>
    <ligand>
        <name>substrate</name>
    </ligand>
</feature>
<feature type="binding site" evidence="1">
    <location>
        <position position="355"/>
    </location>
    <ligand>
        <name>substrate</name>
    </ligand>
</feature>
<feature type="binding site" evidence="1">
    <location>
        <position position="355"/>
    </location>
    <ligand>
        <name>Zn(2+)</name>
        <dbReference type="ChEBI" id="CHEBI:29105"/>
    </ligand>
</feature>
<feature type="binding site" evidence="1">
    <location>
        <position position="409"/>
    </location>
    <ligand>
        <name>substrate</name>
    </ligand>
</feature>
<feature type="binding site" evidence="1">
    <location>
        <position position="414"/>
    </location>
    <ligand>
        <name>substrate</name>
    </ligand>
</feature>
<feature type="binding site" evidence="1">
    <location>
        <position position="414"/>
    </location>
    <ligand>
        <name>Zn(2+)</name>
        <dbReference type="ChEBI" id="CHEBI:29105"/>
    </ligand>
</feature>
<proteinExistence type="inferred from homology"/>
<accession>Q65EF9</accession>
<accession>Q62PX7</accession>